<evidence type="ECO:0000250" key="1"/>
<evidence type="ECO:0000250" key="2">
    <source>
        <dbReference type="UniProtKB" id="Q8LQ68"/>
    </source>
</evidence>
<evidence type="ECO:0000255" key="3"/>
<evidence type="ECO:0000255" key="4">
    <source>
        <dbReference type="PROSITE-ProRule" id="PRU01084"/>
    </source>
</evidence>
<evidence type="ECO:0000269" key="5">
    <source>
    </source>
</evidence>
<evidence type="ECO:0000303" key="6">
    <source>
    </source>
</evidence>
<evidence type="ECO:0000305" key="7"/>
<evidence type="ECO:0000305" key="8">
    <source>
    </source>
</evidence>
<keyword id="KW-0067">ATP-binding</keyword>
<keyword id="KW-0150">Chloroplast</keyword>
<keyword id="KW-0324">Glycolysis</keyword>
<keyword id="KW-0418">Kinase</keyword>
<keyword id="KW-0472">Membrane</keyword>
<keyword id="KW-0547">Nucleotide-binding</keyword>
<keyword id="KW-0934">Plastid</keyword>
<keyword id="KW-1002">Plastid outer membrane</keyword>
<keyword id="KW-1185">Reference proteome</keyword>
<keyword id="KW-0808">Transferase</keyword>
<keyword id="KW-0812">Transmembrane</keyword>
<keyword id="KW-1133">Transmembrane helix</keyword>
<gene>
    <name type="primary">HXK2</name>
</gene>
<dbReference type="EC" id="2.7.1.1" evidence="8"/>
<dbReference type="EMBL" id="AF106068">
    <property type="protein sequence ID" value="AAF14186.1"/>
    <property type="molecule type" value="mRNA"/>
</dbReference>
<dbReference type="RefSeq" id="NP_001274841.1">
    <property type="nucleotide sequence ID" value="NM_001287912.1"/>
</dbReference>
<dbReference type="SMR" id="Q9SQ76"/>
<dbReference type="STRING" id="4113.Q9SQ76"/>
<dbReference type="PaxDb" id="4113-PGSC0003DMT400042598"/>
<dbReference type="EnsemblPlants" id="RHC06H1G2227.2.1">
    <property type="protein sequence ID" value="RHC06H1G2227.2.1"/>
    <property type="gene ID" value="RHC06H1G2227.2"/>
</dbReference>
<dbReference type="GeneID" id="102577690"/>
<dbReference type="Gramene" id="RHC06H1G2227.2.1">
    <property type="protein sequence ID" value="RHC06H1G2227.2.1"/>
    <property type="gene ID" value="RHC06H1G2227.2"/>
</dbReference>
<dbReference type="KEGG" id="sot:102577690"/>
<dbReference type="eggNOG" id="KOG1369">
    <property type="taxonomic scope" value="Eukaryota"/>
</dbReference>
<dbReference type="InParanoid" id="Q9SQ76"/>
<dbReference type="OrthoDB" id="419537at2759"/>
<dbReference type="BRENDA" id="2.7.1.1">
    <property type="organism ID" value="5757"/>
</dbReference>
<dbReference type="UniPathway" id="UPA00109">
    <property type="reaction ID" value="UER00180"/>
</dbReference>
<dbReference type="UniPathway" id="UPA00242"/>
<dbReference type="Proteomes" id="UP000011115">
    <property type="component" value="Unassembled WGS sequence"/>
</dbReference>
<dbReference type="ExpressionAtlas" id="Q9SQ76">
    <property type="expression patterns" value="baseline"/>
</dbReference>
<dbReference type="GO" id="GO:0009707">
    <property type="term" value="C:chloroplast outer membrane"/>
    <property type="evidence" value="ECO:0007669"/>
    <property type="project" value="UniProtKB-SubCell"/>
</dbReference>
<dbReference type="GO" id="GO:0005829">
    <property type="term" value="C:cytosol"/>
    <property type="evidence" value="ECO:0000318"/>
    <property type="project" value="GO_Central"/>
</dbReference>
<dbReference type="GO" id="GO:0005739">
    <property type="term" value="C:mitochondrion"/>
    <property type="evidence" value="ECO:0000318"/>
    <property type="project" value="GO_Central"/>
</dbReference>
<dbReference type="GO" id="GO:0005524">
    <property type="term" value="F:ATP binding"/>
    <property type="evidence" value="ECO:0007669"/>
    <property type="project" value="UniProtKB-KW"/>
</dbReference>
<dbReference type="GO" id="GO:0005536">
    <property type="term" value="F:D-glucose binding"/>
    <property type="evidence" value="ECO:0007669"/>
    <property type="project" value="InterPro"/>
</dbReference>
<dbReference type="GO" id="GO:0008865">
    <property type="term" value="F:fructokinase activity"/>
    <property type="evidence" value="ECO:0000318"/>
    <property type="project" value="GO_Central"/>
</dbReference>
<dbReference type="GO" id="GO:0004340">
    <property type="term" value="F:glucokinase activity"/>
    <property type="evidence" value="ECO:0000318"/>
    <property type="project" value="GO_Central"/>
</dbReference>
<dbReference type="GO" id="GO:0051156">
    <property type="term" value="P:glucose 6-phosphate metabolic process"/>
    <property type="evidence" value="ECO:0000318"/>
    <property type="project" value="GO_Central"/>
</dbReference>
<dbReference type="GO" id="GO:0006006">
    <property type="term" value="P:glucose metabolic process"/>
    <property type="evidence" value="ECO:0000318"/>
    <property type="project" value="GO_Central"/>
</dbReference>
<dbReference type="GO" id="GO:0006096">
    <property type="term" value="P:glycolytic process"/>
    <property type="evidence" value="ECO:0000318"/>
    <property type="project" value="GO_Central"/>
</dbReference>
<dbReference type="GO" id="GO:0001678">
    <property type="term" value="P:intracellular glucose homeostasis"/>
    <property type="evidence" value="ECO:0000318"/>
    <property type="project" value="GO_Central"/>
</dbReference>
<dbReference type="CDD" id="cd24020">
    <property type="entry name" value="ASKHA_NBD_HK_plant"/>
    <property type="match status" value="1"/>
</dbReference>
<dbReference type="FunFam" id="3.30.420.40:FF:000034">
    <property type="entry name" value="Phosphotransferase"/>
    <property type="match status" value="1"/>
</dbReference>
<dbReference type="FunFam" id="3.40.367.20:FF:000003">
    <property type="entry name" value="Phosphotransferase"/>
    <property type="match status" value="1"/>
</dbReference>
<dbReference type="Gene3D" id="3.30.420.40">
    <property type="match status" value="1"/>
</dbReference>
<dbReference type="Gene3D" id="3.40.367.20">
    <property type="match status" value="1"/>
</dbReference>
<dbReference type="InterPro" id="IPR043129">
    <property type="entry name" value="ATPase_NBD"/>
</dbReference>
<dbReference type="InterPro" id="IPR001312">
    <property type="entry name" value="Hexokinase"/>
</dbReference>
<dbReference type="InterPro" id="IPR019807">
    <property type="entry name" value="Hexokinase_BS"/>
</dbReference>
<dbReference type="InterPro" id="IPR022673">
    <property type="entry name" value="Hexokinase_C"/>
</dbReference>
<dbReference type="InterPro" id="IPR022672">
    <property type="entry name" value="Hexokinase_N"/>
</dbReference>
<dbReference type="PANTHER" id="PTHR19443">
    <property type="entry name" value="HEXOKINASE"/>
    <property type="match status" value="1"/>
</dbReference>
<dbReference type="PANTHER" id="PTHR19443:SF67">
    <property type="entry name" value="HEXOKINASE-2"/>
    <property type="match status" value="1"/>
</dbReference>
<dbReference type="Pfam" id="PF00349">
    <property type="entry name" value="Hexokinase_1"/>
    <property type="match status" value="1"/>
</dbReference>
<dbReference type="Pfam" id="PF03727">
    <property type="entry name" value="Hexokinase_2"/>
    <property type="match status" value="1"/>
</dbReference>
<dbReference type="PRINTS" id="PR00475">
    <property type="entry name" value="HEXOKINASE"/>
</dbReference>
<dbReference type="SUPFAM" id="SSF53067">
    <property type="entry name" value="Actin-like ATPase domain"/>
    <property type="match status" value="2"/>
</dbReference>
<dbReference type="PROSITE" id="PS00378">
    <property type="entry name" value="HEXOKINASE_1"/>
    <property type="match status" value="1"/>
</dbReference>
<dbReference type="PROSITE" id="PS51748">
    <property type="entry name" value="HEXOKINASE_2"/>
    <property type="match status" value="1"/>
</dbReference>
<protein>
    <recommendedName>
        <fullName>Hexokinase-2</fullName>
        <ecNumber evidence="8">2.7.1.1</ecNumber>
    </recommendedName>
    <alternativeName>
        <fullName evidence="6">StHK2</fullName>
    </alternativeName>
</protein>
<feature type="chain" id="PRO_0000197616" description="Hexokinase-2">
    <location>
        <begin position="1"/>
        <end position="496"/>
    </location>
</feature>
<feature type="transmembrane region" description="Helical" evidence="3">
    <location>
        <begin position="4"/>
        <end position="24"/>
    </location>
</feature>
<feature type="domain" description="Hexokinase" evidence="4">
    <location>
        <begin position="35"/>
        <end position="487"/>
    </location>
</feature>
<feature type="region of interest" description="Hexokinase small subdomain" evidence="4">
    <location>
        <begin position="90"/>
        <end position="228"/>
    </location>
</feature>
<feature type="region of interest" description="Hexokinase large subdomain" evidence="4">
    <location>
        <begin position="229"/>
        <end position="476"/>
    </location>
</feature>
<feature type="binding site" evidence="2">
    <location>
        <position position="104"/>
    </location>
    <ligand>
        <name>ADP</name>
        <dbReference type="ChEBI" id="CHEBI:456216"/>
    </ligand>
</feature>
<feature type="binding site" evidence="2">
    <location>
        <position position="105"/>
    </location>
    <ligand>
        <name>ADP</name>
        <dbReference type="ChEBI" id="CHEBI:456216"/>
    </ligand>
</feature>
<feature type="binding site" evidence="2">
    <location>
        <position position="106"/>
    </location>
    <ligand>
        <name>ADP</name>
        <dbReference type="ChEBI" id="CHEBI:456216"/>
    </ligand>
</feature>
<feature type="binding site" evidence="2">
    <location>
        <position position="194"/>
    </location>
    <ligand>
        <name>D-glucose</name>
        <dbReference type="ChEBI" id="CHEBI:4167"/>
    </ligand>
</feature>
<feature type="binding site" evidence="2">
    <location>
        <position position="195"/>
    </location>
    <ligand>
        <name>D-glucose</name>
        <dbReference type="ChEBI" id="CHEBI:4167"/>
    </ligand>
</feature>
<feature type="binding site" evidence="2">
    <location>
        <position position="229"/>
    </location>
    <ligand>
        <name>D-glucose</name>
        <dbReference type="ChEBI" id="CHEBI:4167"/>
    </ligand>
</feature>
<feature type="binding site" evidence="2">
    <location>
        <position position="230"/>
    </location>
    <ligand>
        <name>D-glucose</name>
        <dbReference type="ChEBI" id="CHEBI:4167"/>
    </ligand>
</feature>
<feature type="binding site" evidence="2">
    <location>
        <position position="253"/>
    </location>
    <ligand>
        <name>ADP</name>
        <dbReference type="ChEBI" id="CHEBI:456216"/>
    </ligand>
</feature>
<feature type="binding site" evidence="2">
    <location>
        <position position="256"/>
    </location>
    <ligand>
        <name>D-glucose</name>
        <dbReference type="ChEBI" id="CHEBI:4167"/>
    </ligand>
</feature>
<feature type="binding site" evidence="2">
    <location>
        <position position="284"/>
    </location>
    <ligand>
        <name>D-glucose</name>
        <dbReference type="ChEBI" id="CHEBI:4167"/>
    </ligand>
</feature>
<feature type="binding site" evidence="2">
    <location>
        <position position="315"/>
    </location>
    <ligand>
        <name>D-glucose</name>
        <dbReference type="ChEBI" id="CHEBI:4167"/>
    </ligand>
</feature>
<feature type="binding site" evidence="2">
    <location>
        <position position="441"/>
    </location>
    <ligand>
        <name>ADP</name>
        <dbReference type="ChEBI" id="CHEBI:456216"/>
    </ligand>
</feature>
<comment type="function">
    <text evidence="5">Fructose and glucose phosphorylating enzyme. May be involved in the phosphorylation of glucose during the export from plastids to cytosol. Seems neither to be involved in cell sugar sensing nor in carbohydrate metabolism in tuber.</text>
</comment>
<comment type="catalytic activity">
    <reaction evidence="8">
        <text>a D-hexose + ATP = a D-hexose 6-phosphate + ADP + H(+)</text>
        <dbReference type="Rhea" id="RHEA:22740"/>
        <dbReference type="ChEBI" id="CHEBI:4194"/>
        <dbReference type="ChEBI" id="CHEBI:15378"/>
        <dbReference type="ChEBI" id="CHEBI:30616"/>
        <dbReference type="ChEBI" id="CHEBI:229467"/>
        <dbReference type="ChEBI" id="CHEBI:456216"/>
        <dbReference type="EC" id="2.7.1.1"/>
    </reaction>
    <physiologicalReaction direction="left-to-right" evidence="8">
        <dbReference type="Rhea" id="RHEA:22741"/>
    </physiologicalReaction>
</comment>
<comment type="catalytic activity">
    <reaction evidence="8">
        <text>D-fructose + ATP = D-fructose 6-phosphate + ADP + H(+)</text>
        <dbReference type="Rhea" id="RHEA:16125"/>
        <dbReference type="ChEBI" id="CHEBI:15378"/>
        <dbReference type="ChEBI" id="CHEBI:30616"/>
        <dbReference type="ChEBI" id="CHEBI:37721"/>
        <dbReference type="ChEBI" id="CHEBI:61527"/>
        <dbReference type="ChEBI" id="CHEBI:456216"/>
        <dbReference type="EC" id="2.7.1.1"/>
    </reaction>
    <physiologicalReaction direction="left-to-right" evidence="8">
        <dbReference type="Rhea" id="RHEA:16126"/>
    </physiologicalReaction>
</comment>
<comment type="catalytic activity">
    <reaction evidence="8">
        <text>D-glucose + ATP = D-glucose 6-phosphate + ADP + H(+)</text>
        <dbReference type="Rhea" id="RHEA:17825"/>
        <dbReference type="ChEBI" id="CHEBI:4167"/>
        <dbReference type="ChEBI" id="CHEBI:15378"/>
        <dbReference type="ChEBI" id="CHEBI:30616"/>
        <dbReference type="ChEBI" id="CHEBI:61548"/>
        <dbReference type="ChEBI" id="CHEBI:456216"/>
        <dbReference type="EC" id="2.7.1.1"/>
    </reaction>
    <physiologicalReaction direction="left-to-right" evidence="8">
        <dbReference type="Rhea" id="RHEA:17826"/>
    </physiologicalReaction>
</comment>
<comment type="pathway">
    <text evidence="8">Carbohydrate metabolism; hexose metabolism.</text>
</comment>
<comment type="pathway">
    <text evidence="8">Carbohydrate degradation; glycolysis; D-glyceraldehyde 3-phosphate and glycerone phosphate from D-glucose: step 1/4.</text>
</comment>
<comment type="subcellular location">
    <subcellularLocation>
        <location evidence="1">Plastid</location>
        <location evidence="1">Chloroplast outer membrane</location>
        <topology evidence="1">Single-pass membrane protein</topology>
    </subcellularLocation>
</comment>
<comment type="similarity">
    <text evidence="4 7">Belongs to the hexokinase family.</text>
</comment>
<name>HXK2_SOLTU</name>
<accession>Q9SQ76</accession>
<sequence>MKKATVGAVVVGTAAAVAVAALIMRHRMGKSSKWARARAILKEFEEKCATPDGKLKQVADAMTVEMHAGLASEGGSKLKMLISYVDNLPTGDEGGVFYALDLGGTNFRVLRVQLGGKDGGIIHQEFAEASIPPNLMVGTSEALFDYIAAELAKFVAEEGEEFHPPPGRQRELGFTFSFPIMQTSINSGTLIRWTKGFSIDDTVGKDVVAELTKAMQKREIDMRVSALVNDTVGTLAGGRFTNKDVSIAVILGTGTNAAYVERAQAIPKWHGPLPKSGEMVINMEWGNFRSSHLPLTEYDHAMDTNSLNPGEQIFEKICSGMYLGEILRRVLLRMAEEAGIFGEEVPPKLKNSFILRTPEMSAMHHDTSSDLRVVGDKLKDILEISNSSLKTRRLVVELCNIVATRGARLAAAGILGIIKKMGKDTPRESGPEKIVVAMDGGLYEHYTEYSKCLENTLVELLGKEMATSIVFKHANDGSGIGAALLAASNSVYVEDK</sequence>
<proteinExistence type="evidence at transcript level"/>
<organism>
    <name type="scientific">Solanum tuberosum</name>
    <name type="common">Potato</name>
    <dbReference type="NCBI Taxonomy" id="4113"/>
    <lineage>
        <taxon>Eukaryota</taxon>
        <taxon>Viridiplantae</taxon>
        <taxon>Streptophyta</taxon>
        <taxon>Embryophyta</taxon>
        <taxon>Tracheophyta</taxon>
        <taxon>Spermatophyta</taxon>
        <taxon>Magnoliopsida</taxon>
        <taxon>eudicotyledons</taxon>
        <taxon>Gunneridae</taxon>
        <taxon>Pentapetalae</taxon>
        <taxon>asterids</taxon>
        <taxon>lamiids</taxon>
        <taxon>Solanales</taxon>
        <taxon>Solanaceae</taxon>
        <taxon>Solanoideae</taxon>
        <taxon>Solaneae</taxon>
        <taxon>Solanum</taxon>
    </lineage>
</organism>
<reference key="1">
    <citation type="journal article" date="2002" name="Plant Mol. Biol.">
        <title>Potato hexokinase 2 complements transgenic Arabidopsis plants deficient in hexokinase 1 but does not play a key role in tuber carbohydrate metabolism.</title>
        <authorList>
            <person name="Veramendi J."/>
            <person name="Fernie A.R."/>
            <person name="Leisse A."/>
            <person name="Willmitzer L."/>
            <person name="Trethewey R.N."/>
        </authorList>
    </citation>
    <scope>NUCLEOTIDE SEQUENCE [MRNA]</scope>
    <scope>FUNCTION</scope>
</reference>